<sequence length="252" mass="29479">MGKNKLEKFADMASYPHVFEYPYSAVDNVPFDMKGKWHKEFFKNDNPIVLELGCGRGEYTVGLGRMFPDKNFIAVDIKGARMWTGATESLQAGMKNVAFLRTNIEIIDRFFAEGEVSEIWLTFSDPQMKKATKRLTSTYFMERYRKFLVSNGIIHLKTDSNFMFTYTKYMIEENGLPVEFITEDLYHSDLVDDILGIKTYYEQQWLDRGLSIKYIKFLLPQEGELREPDIEIELDSYRSYNRSKRSGLQTSK</sequence>
<dbReference type="EC" id="2.1.1.33" evidence="2"/>
<dbReference type="EMBL" id="AP006841">
    <property type="protein sequence ID" value="BAD50737.1"/>
    <property type="molecule type" value="Genomic_DNA"/>
</dbReference>
<dbReference type="RefSeq" id="WP_005791725.1">
    <property type="nucleotide sequence ID" value="NZ_UYXF01000013.1"/>
</dbReference>
<dbReference type="RefSeq" id="YP_101271.1">
    <property type="nucleotide sequence ID" value="NC_006347.1"/>
</dbReference>
<dbReference type="SMR" id="Q64P45"/>
<dbReference type="STRING" id="295405.BF3995"/>
<dbReference type="KEGG" id="bfr:BF3995"/>
<dbReference type="PATRIC" id="fig|295405.11.peg.3844"/>
<dbReference type="HOGENOM" id="CLU_050910_2_2_10"/>
<dbReference type="OrthoDB" id="9802090at2"/>
<dbReference type="UniPathway" id="UPA00989"/>
<dbReference type="Proteomes" id="UP000002197">
    <property type="component" value="Chromosome"/>
</dbReference>
<dbReference type="GO" id="GO:0043527">
    <property type="term" value="C:tRNA methyltransferase complex"/>
    <property type="evidence" value="ECO:0007669"/>
    <property type="project" value="TreeGrafter"/>
</dbReference>
<dbReference type="GO" id="GO:0008176">
    <property type="term" value="F:tRNA (guanine(46)-N7)-methyltransferase activity"/>
    <property type="evidence" value="ECO:0007669"/>
    <property type="project" value="UniProtKB-UniRule"/>
</dbReference>
<dbReference type="FunFam" id="3.40.50.150:FF:000179">
    <property type="entry name" value="tRNA (guanine-N(7)-)-methyltransferase"/>
    <property type="match status" value="1"/>
</dbReference>
<dbReference type="Gene3D" id="3.40.50.150">
    <property type="entry name" value="Vaccinia Virus protein VP39"/>
    <property type="match status" value="1"/>
</dbReference>
<dbReference type="HAMAP" id="MF_01057">
    <property type="entry name" value="tRNA_methyltr_TrmB"/>
    <property type="match status" value="1"/>
</dbReference>
<dbReference type="InterPro" id="IPR029063">
    <property type="entry name" value="SAM-dependent_MTases_sf"/>
</dbReference>
<dbReference type="InterPro" id="IPR003358">
    <property type="entry name" value="tRNA_(Gua-N-7)_MeTrfase_Trmb"/>
</dbReference>
<dbReference type="InterPro" id="IPR055361">
    <property type="entry name" value="tRNA_methyltr_TrmB_bact"/>
</dbReference>
<dbReference type="NCBIfam" id="NF001080">
    <property type="entry name" value="PRK00121.2-2"/>
    <property type="match status" value="1"/>
</dbReference>
<dbReference type="PANTHER" id="PTHR23417">
    <property type="entry name" value="3-DEOXY-D-MANNO-OCTULOSONIC-ACID TRANSFERASE/TRNA GUANINE-N 7 - -METHYLTRANSFERASE"/>
    <property type="match status" value="1"/>
</dbReference>
<dbReference type="PANTHER" id="PTHR23417:SF14">
    <property type="entry name" value="PENTACOTRIPEPTIDE-REPEAT REGION OF PRORP DOMAIN-CONTAINING PROTEIN"/>
    <property type="match status" value="1"/>
</dbReference>
<dbReference type="Pfam" id="PF02390">
    <property type="entry name" value="Methyltransf_4"/>
    <property type="match status" value="1"/>
</dbReference>
<dbReference type="SUPFAM" id="SSF53335">
    <property type="entry name" value="S-adenosyl-L-methionine-dependent methyltransferases"/>
    <property type="match status" value="1"/>
</dbReference>
<dbReference type="PROSITE" id="PS51625">
    <property type="entry name" value="SAM_MT_TRMB"/>
    <property type="match status" value="1"/>
</dbReference>
<gene>
    <name evidence="2" type="primary">trmB</name>
    <name type="ordered locus">BF3995</name>
</gene>
<reference key="1">
    <citation type="journal article" date="2004" name="Proc. Natl. Acad. Sci. U.S.A.">
        <title>Genomic analysis of Bacteroides fragilis reveals extensive DNA inversions regulating cell surface adaptation.</title>
        <authorList>
            <person name="Kuwahara T."/>
            <person name="Yamashita A."/>
            <person name="Hirakawa H."/>
            <person name="Nakayama H."/>
            <person name="Toh H."/>
            <person name="Okada N."/>
            <person name="Kuhara S."/>
            <person name="Hattori M."/>
            <person name="Hayashi T."/>
            <person name="Ohnishi Y."/>
        </authorList>
    </citation>
    <scope>NUCLEOTIDE SEQUENCE [LARGE SCALE GENOMIC DNA]</scope>
    <source>
        <strain>YCH46</strain>
    </source>
</reference>
<comment type="function">
    <text evidence="2">Catalyzes the formation of N(7)-methylguanine at position 46 (m7G46) in tRNA.</text>
</comment>
<comment type="catalytic activity">
    <reaction evidence="2">
        <text>guanosine(46) in tRNA + S-adenosyl-L-methionine = N(7)-methylguanosine(46) in tRNA + S-adenosyl-L-homocysteine</text>
        <dbReference type="Rhea" id="RHEA:42708"/>
        <dbReference type="Rhea" id="RHEA-COMP:10188"/>
        <dbReference type="Rhea" id="RHEA-COMP:10189"/>
        <dbReference type="ChEBI" id="CHEBI:57856"/>
        <dbReference type="ChEBI" id="CHEBI:59789"/>
        <dbReference type="ChEBI" id="CHEBI:74269"/>
        <dbReference type="ChEBI" id="CHEBI:74480"/>
        <dbReference type="EC" id="2.1.1.33"/>
    </reaction>
</comment>
<comment type="pathway">
    <text evidence="2">tRNA modification; N(7)-methylguanine-tRNA biosynthesis.</text>
</comment>
<comment type="similarity">
    <text evidence="2">Belongs to the class I-like SAM-binding methyltransferase superfamily. TrmB family.</text>
</comment>
<feature type="chain" id="PRO_0000288122" description="tRNA (guanine-N(7)-)-methyltransferase">
    <location>
        <begin position="1"/>
        <end position="252"/>
    </location>
</feature>
<feature type="active site" evidence="1">
    <location>
        <position position="125"/>
    </location>
</feature>
<feature type="binding site" evidence="2">
    <location>
        <position position="51"/>
    </location>
    <ligand>
        <name>S-adenosyl-L-methionine</name>
        <dbReference type="ChEBI" id="CHEBI:59789"/>
    </ligand>
</feature>
<feature type="binding site" evidence="2">
    <location>
        <position position="76"/>
    </location>
    <ligand>
        <name>S-adenosyl-L-methionine</name>
        <dbReference type="ChEBI" id="CHEBI:59789"/>
    </ligand>
</feature>
<feature type="binding site" evidence="2">
    <location>
        <position position="103"/>
    </location>
    <ligand>
        <name>S-adenosyl-L-methionine</name>
        <dbReference type="ChEBI" id="CHEBI:59789"/>
    </ligand>
</feature>
<feature type="binding site" evidence="2">
    <location>
        <position position="125"/>
    </location>
    <ligand>
        <name>S-adenosyl-L-methionine</name>
        <dbReference type="ChEBI" id="CHEBI:59789"/>
    </ligand>
</feature>
<feature type="binding site" evidence="2">
    <location>
        <position position="129"/>
    </location>
    <ligand>
        <name>substrate</name>
    </ligand>
</feature>
<feature type="binding site" evidence="2">
    <location>
        <position position="159"/>
    </location>
    <ligand>
        <name>substrate</name>
    </ligand>
</feature>
<feature type="binding site" evidence="2">
    <location>
        <begin position="199"/>
        <end position="202"/>
    </location>
    <ligand>
        <name>substrate</name>
    </ligand>
</feature>
<proteinExistence type="inferred from homology"/>
<accession>Q64P45</accession>
<protein>
    <recommendedName>
        <fullName evidence="2">tRNA (guanine-N(7)-)-methyltransferase</fullName>
        <ecNumber evidence="2">2.1.1.33</ecNumber>
    </recommendedName>
    <alternativeName>
        <fullName evidence="2">tRNA (guanine(46)-N(7))-methyltransferase</fullName>
    </alternativeName>
    <alternativeName>
        <fullName evidence="2">tRNA(m7G46)-methyltransferase</fullName>
    </alternativeName>
</protein>
<evidence type="ECO:0000250" key="1"/>
<evidence type="ECO:0000255" key="2">
    <source>
        <dbReference type="HAMAP-Rule" id="MF_01057"/>
    </source>
</evidence>
<keyword id="KW-0489">Methyltransferase</keyword>
<keyword id="KW-0949">S-adenosyl-L-methionine</keyword>
<keyword id="KW-0808">Transferase</keyword>
<keyword id="KW-0819">tRNA processing</keyword>
<name>TRMB_BACFR</name>
<organism>
    <name type="scientific">Bacteroides fragilis (strain YCH46)</name>
    <dbReference type="NCBI Taxonomy" id="295405"/>
    <lineage>
        <taxon>Bacteria</taxon>
        <taxon>Pseudomonadati</taxon>
        <taxon>Bacteroidota</taxon>
        <taxon>Bacteroidia</taxon>
        <taxon>Bacteroidales</taxon>
        <taxon>Bacteroidaceae</taxon>
        <taxon>Bacteroides</taxon>
    </lineage>
</organism>